<gene>
    <name evidence="1" type="primary">miaB</name>
    <name type="ordered locus">HY04AAS1_0851</name>
</gene>
<sequence>MKYFIKTYGCQMNINDSEKIKGILQTQGYEPATREEDADLVILNTCTIREKPDQKVWSHLGEIKKLKSINPNIKIGVCGCMAQRAGYEIASKMPFIDLVFGTKNIHHMPKLLEDVKVGNRAIEILEEEDPSENILDSYPTVRDNSYCAYVTIMRGCDKECTYCVVPFTRGKERSRNPQSILDEVKSLVDSGVMEIHLIGQNVTAYGKDIDYPFYKLLENISKIEGVKRIRFTTGHPIDMTDDIIETMANLPNMVNHLHLPFQAGSDRILELMKRNYTKAYYLNRIEKLKAKIKDITFSTDIIIGFPTETEEDFQHTLDVVQTVEFEQVFSFKYSKRPNTPAYYMEDDLTDEIKTDRIKRLLEIQKAITSKLMQRYKNTVQKVLVEDKKGNTYIGRTTTNVWCNITSSQDILGKEVEVLIAKAGFQSLDGVVQNIL</sequence>
<feature type="chain" id="PRO_0000374343" description="tRNA-2-methylthio-N(6)-dimethylallyladenosine synthase">
    <location>
        <begin position="1"/>
        <end position="435"/>
    </location>
</feature>
<feature type="domain" description="MTTase N-terminal" evidence="1">
    <location>
        <begin position="1"/>
        <end position="117"/>
    </location>
</feature>
<feature type="domain" description="Radical SAM core" evidence="2">
    <location>
        <begin position="142"/>
        <end position="370"/>
    </location>
</feature>
<feature type="domain" description="TRAM" evidence="1">
    <location>
        <begin position="373"/>
        <end position="433"/>
    </location>
</feature>
<feature type="binding site" evidence="1">
    <location>
        <position position="10"/>
    </location>
    <ligand>
        <name>[4Fe-4S] cluster</name>
        <dbReference type="ChEBI" id="CHEBI:49883"/>
        <label>1</label>
    </ligand>
</feature>
<feature type="binding site" evidence="1">
    <location>
        <position position="46"/>
    </location>
    <ligand>
        <name>[4Fe-4S] cluster</name>
        <dbReference type="ChEBI" id="CHEBI:49883"/>
        <label>1</label>
    </ligand>
</feature>
<feature type="binding site" evidence="1">
    <location>
        <position position="80"/>
    </location>
    <ligand>
        <name>[4Fe-4S] cluster</name>
        <dbReference type="ChEBI" id="CHEBI:49883"/>
        <label>1</label>
    </ligand>
</feature>
<feature type="binding site" evidence="1">
    <location>
        <position position="156"/>
    </location>
    <ligand>
        <name>[4Fe-4S] cluster</name>
        <dbReference type="ChEBI" id="CHEBI:49883"/>
        <label>2</label>
        <note>4Fe-4S-S-AdoMet</note>
    </ligand>
</feature>
<feature type="binding site" evidence="1">
    <location>
        <position position="160"/>
    </location>
    <ligand>
        <name>[4Fe-4S] cluster</name>
        <dbReference type="ChEBI" id="CHEBI:49883"/>
        <label>2</label>
        <note>4Fe-4S-S-AdoMet</note>
    </ligand>
</feature>
<feature type="binding site" evidence="1">
    <location>
        <position position="163"/>
    </location>
    <ligand>
        <name>[4Fe-4S] cluster</name>
        <dbReference type="ChEBI" id="CHEBI:49883"/>
        <label>2</label>
        <note>4Fe-4S-S-AdoMet</note>
    </ligand>
</feature>
<accession>B4U8S7</accession>
<name>MIAB_HYDS0</name>
<comment type="function">
    <text evidence="1">Catalyzes the methylthiolation of N6-(dimethylallyl)adenosine (i(6)A), leading to the formation of 2-methylthio-N6-(dimethylallyl)adenosine (ms(2)i(6)A) at position 37 in tRNAs that read codons beginning with uridine.</text>
</comment>
<comment type="catalytic activity">
    <reaction evidence="1">
        <text>N(6)-dimethylallyladenosine(37) in tRNA + (sulfur carrier)-SH + AH2 + 2 S-adenosyl-L-methionine = 2-methylsulfanyl-N(6)-dimethylallyladenosine(37) in tRNA + (sulfur carrier)-H + 5'-deoxyadenosine + L-methionine + A + S-adenosyl-L-homocysteine + 2 H(+)</text>
        <dbReference type="Rhea" id="RHEA:37067"/>
        <dbReference type="Rhea" id="RHEA-COMP:10375"/>
        <dbReference type="Rhea" id="RHEA-COMP:10376"/>
        <dbReference type="Rhea" id="RHEA-COMP:14737"/>
        <dbReference type="Rhea" id="RHEA-COMP:14739"/>
        <dbReference type="ChEBI" id="CHEBI:13193"/>
        <dbReference type="ChEBI" id="CHEBI:15378"/>
        <dbReference type="ChEBI" id="CHEBI:17319"/>
        <dbReference type="ChEBI" id="CHEBI:17499"/>
        <dbReference type="ChEBI" id="CHEBI:29917"/>
        <dbReference type="ChEBI" id="CHEBI:57844"/>
        <dbReference type="ChEBI" id="CHEBI:57856"/>
        <dbReference type="ChEBI" id="CHEBI:59789"/>
        <dbReference type="ChEBI" id="CHEBI:64428"/>
        <dbReference type="ChEBI" id="CHEBI:74415"/>
        <dbReference type="ChEBI" id="CHEBI:74417"/>
        <dbReference type="EC" id="2.8.4.3"/>
    </reaction>
</comment>
<comment type="cofactor">
    <cofactor evidence="1">
        <name>[4Fe-4S] cluster</name>
        <dbReference type="ChEBI" id="CHEBI:49883"/>
    </cofactor>
    <text evidence="1">Binds 2 [4Fe-4S] clusters. One cluster is coordinated with 3 cysteines and an exchangeable S-adenosyl-L-methionine.</text>
</comment>
<comment type="subunit">
    <text evidence="1">Monomer.</text>
</comment>
<comment type="subcellular location">
    <subcellularLocation>
        <location evidence="1">Cytoplasm</location>
    </subcellularLocation>
</comment>
<comment type="similarity">
    <text evidence="1">Belongs to the methylthiotransferase family. MiaB subfamily.</text>
</comment>
<protein>
    <recommendedName>
        <fullName evidence="1">tRNA-2-methylthio-N(6)-dimethylallyladenosine synthase</fullName>
        <ecNumber evidence="1">2.8.4.3</ecNumber>
    </recommendedName>
    <alternativeName>
        <fullName evidence="1">(Dimethylallyl)adenosine tRNA methylthiotransferase MiaB</fullName>
    </alternativeName>
    <alternativeName>
        <fullName evidence="1">tRNA-i(6)A37 methylthiotransferase</fullName>
    </alternativeName>
</protein>
<reference key="1">
    <citation type="journal article" date="2009" name="J. Bacteriol.">
        <title>Complete and draft genome sequences of six members of the Aquificales.</title>
        <authorList>
            <person name="Reysenbach A.-L."/>
            <person name="Hamamura N."/>
            <person name="Podar M."/>
            <person name="Griffiths E."/>
            <person name="Ferreira S."/>
            <person name="Hochstein R."/>
            <person name="Heidelberg J."/>
            <person name="Johnson J."/>
            <person name="Mead D."/>
            <person name="Pohorille A."/>
            <person name="Sarmiento M."/>
            <person name="Schweighofer K."/>
            <person name="Seshadri R."/>
            <person name="Voytek M.A."/>
        </authorList>
    </citation>
    <scope>NUCLEOTIDE SEQUENCE [LARGE SCALE GENOMIC DNA]</scope>
    <source>
        <strain>Y04AAS1</strain>
    </source>
</reference>
<proteinExistence type="inferred from homology"/>
<organism>
    <name type="scientific">Hydrogenobaculum sp. (strain Y04AAS1)</name>
    <dbReference type="NCBI Taxonomy" id="380749"/>
    <lineage>
        <taxon>Bacteria</taxon>
        <taxon>Pseudomonadati</taxon>
        <taxon>Aquificota</taxon>
        <taxon>Aquificia</taxon>
        <taxon>Aquificales</taxon>
        <taxon>Aquificaceae</taxon>
        <taxon>Hydrogenobaculum</taxon>
    </lineage>
</organism>
<keyword id="KW-0004">4Fe-4S</keyword>
<keyword id="KW-0963">Cytoplasm</keyword>
<keyword id="KW-0408">Iron</keyword>
<keyword id="KW-0411">Iron-sulfur</keyword>
<keyword id="KW-0479">Metal-binding</keyword>
<keyword id="KW-0949">S-adenosyl-L-methionine</keyword>
<keyword id="KW-0808">Transferase</keyword>
<keyword id="KW-0819">tRNA processing</keyword>
<evidence type="ECO:0000255" key="1">
    <source>
        <dbReference type="HAMAP-Rule" id="MF_01864"/>
    </source>
</evidence>
<evidence type="ECO:0000255" key="2">
    <source>
        <dbReference type="PROSITE-ProRule" id="PRU01266"/>
    </source>
</evidence>
<dbReference type="EC" id="2.8.4.3" evidence="1"/>
<dbReference type="EMBL" id="CP001130">
    <property type="protein sequence ID" value="ACG57538.1"/>
    <property type="molecule type" value="Genomic_DNA"/>
</dbReference>
<dbReference type="RefSeq" id="WP_012513894.1">
    <property type="nucleotide sequence ID" value="NC_011126.1"/>
</dbReference>
<dbReference type="SMR" id="B4U8S7"/>
<dbReference type="STRING" id="380749.HY04AAS1_0851"/>
<dbReference type="KEGG" id="hya:HY04AAS1_0851"/>
<dbReference type="eggNOG" id="COG0621">
    <property type="taxonomic scope" value="Bacteria"/>
</dbReference>
<dbReference type="HOGENOM" id="CLU_018697_2_0_0"/>
<dbReference type="OrthoDB" id="9805215at2"/>
<dbReference type="GO" id="GO:0005829">
    <property type="term" value="C:cytosol"/>
    <property type="evidence" value="ECO:0007669"/>
    <property type="project" value="TreeGrafter"/>
</dbReference>
<dbReference type="GO" id="GO:0051539">
    <property type="term" value="F:4 iron, 4 sulfur cluster binding"/>
    <property type="evidence" value="ECO:0007669"/>
    <property type="project" value="UniProtKB-UniRule"/>
</dbReference>
<dbReference type="GO" id="GO:0046872">
    <property type="term" value="F:metal ion binding"/>
    <property type="evidence" value="ECO:0007669"/>
    <property type="project" value="UniProtKB-KW"/>
</dbReference>
<dbReference type="GO" id="GO:0035597">
    <property type="term" value="F:N6-isopentenyladenosine methylthiotransferase activity"/>
    <property type="evidence" value="ECO:0007669"/>
    <property type="project" value="TreeGrafter"/>
</dbReference>
<dbReference type="CDD" id="cd01335">
    <property type="entry name" value="Radical_SAM"/>
    <property type="match status" value="1"/>
</dbReference>
<dbReference type="FunFam" id="3.40.50.12160:FF:000006">
    <property type="entry name" value="tRNA-2-methylthio-N(6)-dimethylallyladenosine synthase"/>
    <property type="match status" value="1"/>
</dbReference>
<dbReference type="FunFam" id="3.80.30.20:FF:000001">
    <property type="entry name" value="tRNA-2-methylthio-N(6)-dimethylallyladenosine synthase 2"/>
    <property type="match status" value="1"/>
</dbReference>
<dbReference type="Gene3D" id="3.40.50.12160">
    <property type="entry name" value="Methylthiotransferase, N-terminal domain"/>
    <property type="match status" value="1"/>
</dbReference>
<dbReference type="Gene3D" id="3.80.30.20">
    <property type="entry name" value="tm_1862 like domain"/>
    <property type="match status" value="1"/>
</dbReference>
<dbReference type="HAMAP" id="MF_01864">
    <property type="entry name" value="tRNA_metthiotr_MiaB"/>
    <property type="match status" value="1"/>
</dbReference>
<dbReference type="InterPro" id="IPR006638">
    <property type="entry name" value="Elp3/MiaA/NifB-like_rSAM"/>
</dbReference>
<dbReference type="InterPro" id="IPR005839">
    <property type="entry name" value="Methylthiotransferase"/>
</dbReference>
<dbReference type="InterPro" id="IPR020612">
    <property type="entry name" value="Methylthiotransferase_CS"/>
</dbReference>
<dbReference type="InterPro" id="IPR013848">
    <property type="entry name" value="Methylthiotransferase_N"/>
</dbReference>
<dbReference type="InterPro" id="IPR038135">
    <property type="entry name" value="Methylthiotransferase_N_sf"/>
</dbReference>
<dbReference type="InterPro" id="IPR006463">
    <property type="entry name" value="MiaB_methiolase"/>
</dbReference>
<dbReference type="InterPro" id="IPR007197">
    <property type="entry name" value="rSAM"/>
</dbReference>
<dbReference type="InterPro" id="IPR023404">
    <property type="entry name" value="rSAM_horseshoe"/>
</dbReference>
<dbReference type="InterPro" id="IPR002792">
    <property type="entry name" value="TRAM_dom"/>
</dbReference>
<dbReference type="NCBIfam" id="TIGR01574">
    <property type="entry name" value="miaB-methiolase"/>
    <property type="match status" value="1"/>
</dbReference>
<dbReference type="NCBIfam" id="TIGR00089">
    <property type="entry name" value="MiaB/RimO family radical SAM methylthiotransferase"/>
    <property type="match status" value="1"/>
</dbReference>
<dbReference type="PANTHER" id="PTHR43020">
    <property type="entry name" value="CDK5 REGULATORY SUBUNIT-ASSOCIATED PROTEIN 1"/>
    <property type="match status" value="1"/>
</dbReference>
<dbReference type="PANTHER" id="PTHR43020:SF2">
    <property type="entry name" value="MITOCHONDRIAL TRNA METHYLTHIOTRANSFERASE CDK5RAP1"/>
    <property type="match status" value="1"/>
</dbReference>
<dbReference type="Pfam" id="PF04055">
    <property type="entry name" value="Radical_SAM"/>
    <property type="match status" value="1"/>
</dbReference>
<dbReference type="Pfam" id="PF01938">
    <property type="entry name" value="TRAM"/>
    <property type="match status" value="1"/>
</dbReference>
<dbReference type="Pfam" id="PF00919">
    <property type="entry name" value="UPF0004"/>
    <property type="match status" value="1"/>
</dbReference>
<dbReference type="SFLD" id="SFLDF00273">
    <property type="entry name" value="(dimethylallyl)adenosine_tRNA"/>
    <property type="match status" value="1"/>
</dbReference>
<dbReference type="SFLD" id="SFLDG01082">
    <property type="entry name" value="B12-binding_domain_containing"/>
    <property type="match status" value="1"/>
</dbReference>
<dbReference type="SFLD" id="SFLDG01061">
    <property type="entry name" value="methylthiotransferase"/>
    <property type="match status" value="1"/>
</dbReference>
<dbReference type="SMART" id="SM00729">
    <property type="entry name" value="Elp3"/>
    <property type="match status" value="1"/>
</dbReference>
<dbReference type="SUPFAM" id="SSF102114">
    <property type="entry name" value="Radical SAM enzymes"/>
    <property type="match status" value="1"/>
</dbReference>
<dbReference type="PROSITE" id="PS51449">
    <property type="entry name" value="MTTASE_N"/>
    <property type="match status" value="1"/>
</dbReference>
<dbReference type="PROSITE" id="PS01278">
    <property type="entry name" value="MTTASE_RADICAL"/>
    <property type="match status" value="1"/>
</dbReference>
<dbReference type="PROSITE" id="PS51918">
    <property type="entry name" value="RADICAL_SAM"/>
    <property type="match status" value="1"/>
</dbReference>